<evidence type="ECO:0000255" key="1">
    <source>
        <dbReference type="HAMAP-Rule" id="MF_00222"/>
    </source>
</evidence>
<keyword id="KW-0028">Amino-acid biosynthesis</keyword>
<keyword id="KW-0057">Aromatic amino acid biosynthesis</keyword>
<keyword id="KW-0521">NADP</keyword>
<keyword id="KW-0560">Oxidoreductase</keyword>
<keyword id="KW-1185">Reference proteome</keyword>
<reference key="1">
    <citation type="journal article" date="2004" name="J. Mol. Microbiol. Biotechnol.">
        <title>The complete genome sequence of Bacillus licheniformis DSM13, an organism with great industrial potential.</title>
        <authorList>
            <person name="Veith B."/>
            <person name="Herzberg C."/>
            <person name="Steckel S."/>
            <person name="Feesche J."/>
            <person name="Maurer K.H."/>
            <person name="Ehrenreich P."/>
            <person name="Baeumer S."/>
            <person name="Henne A."/>
            <person name="Liesegang H."/>
            <person name="Merkl R."/>
            <person name="Ehrenreich A."/>
            <person name="Gottschalk G."/>
        </authorList>
    </citation>
    <scope>NUCLEOTIDE SEQUENCE [LARGE SCALE GENOMIC DNA]</scope>
    <source>
        <strain>ATCC 14580 / DSM 13 / JCM 2505 / CCUG 7422 / NBRC 12200 / NCIMB 9375 / NCTC 10341 / NRRL NRS-1264 / Gibson 46</strain>
    </source>
</reference>
<reference key="2">
    <citation type="journal article" date="2004" name="Genome Biol.">
        <title>Complete genome sequence of the industrial bacterium Bacillus licheniformis and comparisons with closely related Bacillus species.</title>
        <authorList>
            <person name="Rey M.W."/>
            <person name="Ramaiya P."/>
            <person name="Nelson B.A."/>
            <person name="Brody-Karpin S.D."/>
            <person name="Zaretsky E.J."/>
            <person name="Tang M."/>
            <person name="Lopez de Leon A."/>
            <person name="Xiang H."/>
            <person name="Gusti V."/>
            <person name="Clausen I.G."/>
            <person name="Olsen P.B."/>
            <person name="Rasmussen M.D."/>
            <person name="Andersen J.T."/>
            <person name="Joergensen P.L."/>
            <person name="Larsen T.S."/>
            <person name="Sorokin A."/>
            <person name="Bolotin A."/>
            <person name="Lapidus A."/>
            <person name="Galleron N."/>
            <person name="Ehrlich S.D."/>
            <person name="Berka R.M."/>
        </authorList>
    </citation>
    <scope>NUCLEOTIDE SEQUENCE [LARGE SCALE GENOMIC DNA]</scope>
    <source>
        <strain>ATCC 14580 / DSM 13 / JCM 2505 / CCUG 7422 / NBRC 12200 / NCIMB 9375 / NCTC 10341 / NRRL NRS-1264 / Gibson 46</strain>
    </source>
</reference>
<dbReference type="EC" id="1.1.1.25" evidence="1"/>
<dbReference type="EMBL" id="CP000002">
    <property type="protein sequence ID" value="AAU24269.1"/>
    <property type="molecule type" value="Genomic_DNA"/>
</dbReference>
<dbReference type="EMBL" id="AE017333">
    <property type="protein sequence ID" value="AAU41630.1"/>
    <property type="molecule type" value="Genomic_DNA"/>
</dbReference>
<dbReference type="RefSeq" id="WP_003183706.1">
    <property type="nucleotide sequence ID" value="NC_006322.1"/>
</dbReference>
<dbReference type="SMR" id="Q65H34"/>
<dbReference type="STRING" id="279010.BL02079"/>
<dbReference type="GeneID" id="92860650"/>
<dbReference type="KEGG" id="bld:BLi02759"/>
<dbReference type="KEGG" id="bli:BL02079"/>
<dbReference type="eggNOG" id="COG0169">
    <property type="taxonomic scope" value="Bacteria"/>
</dbReference>
<dbReference type="HOGENOM" id="CLU_044063_4_1_9"/>
<dbReference type="UniPathway" id="UPA00053">
    <property type="reaction ID" value="UER00087"/>
</dbReference>
<dbReference type="Proteomes" id="UP000000606">
    <property type="component" value="Chromosome"/>
</dbReference>
<dbReference type="GO" id="GO:0005829">
    <property type="term" value="C:cytosol"/>
    <property type="evidence" value="ECO:0007669"/>
    <property type="project" value="TreeGrafter"/>
</dbReference>
<dbReference type="GO" id="GO:0050661">
    <property type="term" value="F:NADP binding"/>
    <property type="evidence" value="ECO:0007669"/>
    <property type="project" value="InterPro"/>
</dbReference>
<dbReference type="GO" id="GO:0004764">
    <property type="term" value="F:shikimate 3-dehydrogenase (NADP+) activity"/>
    <property type="evidence" value="ECO:0007669"/>
    <property type="project" value="UniProtKB-UniRule"/>
</dbReference>
<dbReference type="GO" id="GO:0008652">
    <property type="term" value="P:amino acid biosynthetic process"/>
    <property type="evidence" value="ECO:0007669"/>
    <property type="project" value="UniProtKB-KW"/>
</dbReference>
<dbReference type="GO" id="GO:0009073">
    <property type="term" value="P:aromatic amino acid family biosynthetic process"/>
    <property type="evidence" value="ECO:0007669"/>
    <property type="project" value="UniProtKB-KW"/>
</dbReference>
<dbReference type="GO" id="GO:0009423">
    <property type="term" value="P:chorismate biosynthetic process"/>
    <property type="evidence" value="ECO:0007669"/>
    <property type="project" value="UniProtKB-UniRule"/>
</dbReference>
<dbReference type="GO" id="GO:0019632">
    <property type="term" value="P:shikimate metabolic process"/>
    <property type="evidence" value="ECO:0007669"/>
    <property type="project" value="InterPro"/>
</dbReference>
<dbReference type="CDD" id="cd01065">
    <property type="entry name" value="NAD_bind_Shikimate_DH"/>
    <property type="match status" value="1"/>
</dbReference>
<dbReference type="Gene3D" id="3.40.50.10860">
    <property type="entry name" value="Leucine Dehydrogenase, chain A, domain 1"/>
    <property type="match status" value="1"/>
</dbReference>
<dbReference type="Gene3D" id="3.40.50.720">
    <property type="entry name" value="NAD(P)-binding Rossmann-like Domain"/>
    <property type="match status" value="1"/>
</dbReference>
<dbReference type="HAMAP" id="MF_00222">
    <property type="entry name" value="Shikimate_DH_AroE"/>
    <property type="match status" value="1"/>
</dbReference>
<dbReference type="InterPro" id="IPR046346">
    <property type="entry name" value="Aminoacid_DH-like_N_sf"/>
</dbReference>
<dbReference type="InterPro" id="IPR036291">
    <property type="entry name" value="NAD(P)-bd_dom_sf"/>
</dbReference>
<dbReference type="InterPro" id="IPR041121">
    <property type="entry name" value="SDH_C"/>
</dbReference>
<dbReference type="InterPro" id="IPR011342">
    <property type="entry name" value="Shikimate_DH"/>
</dbReference>
<dbReference type="InterPro" id="IPR013708">
    <property type="entry name" value="Shikimate_DH-bd_N"/>
</dbReference>
<dbReference type="InterPro" id="IPR022893">
    <property type="entry name" value="Shikimate_DH_fam"/>
</dbReference>
<dbReference type="InterPro" id="IPR006151">
    <property type="entry name" value="Shikm_DH/Glu-tRNA_Rdtase"/>
</dbReference>
<dbReference type="NCBIfam" id="TIGR00507">
    <property type="entry name" value="aroE"/>
    <property type="match status" value="1"/>
</dbReference>
<dbReference type="NCBIfam" id="NF001319">
    <property type="entry name" value="PRK00258.3-3"/>
    <property type="match status" value="1"/>
</dbReference>
<dbReference type="PANTHER" id="PTHR21089:SF1">
    <property type="entry name" value="BIFUNCTIONAL 3-DEHYDROQUINATE DEHYDRATASE_SHIKIMATE DEHYDROGENASE, CHLOROPLASTIC"/>
    <property type="match status" value="1"/>
</dbReference>
<dbReference type="PANTHER" id="PTHR21089">
    <property type="entry name" value="SHIKIMATE DEHYDROGENASE"/>
    <property type="match status" value="1"/>
</dbReference>
<dbReference type="Pfam" id="PF18317">
    <property type="entry name" value="SDH_C"/>
    <property type="match status" value="1"/>
</dbReference>
<dbReference type="Pfam" id="PF01488">
    <property type="entry name" value="Shikimate_DH"/>
    <property type="match status" value="1"/>
</dbReference>
<dbReference type="Pfam" id="PF08501">
    <property type="entry name" value="Shikimate_dh_N"/>
    <property type="match status" value="1"/>
</dbReference>
<dbReference type="SUPFAM" id="SSF53223">
    <property type="entry name" value="Aminoacid dehydrogenase-like, N-terminal domain"/>
    <property type="match status" value="1"/>
</dbReference>
<dbReference type="SUPFAM" id="SSF51735">
    <property type="entry name" value="NAD(P)-binding Rossmann-fold domains"/>
    <property type="match status" value="1"/>
</dbReference>
<gene>
    <name evidence="1" type="primary">aroE</name>
    <name type="ordered locus">BLi02759</name>
    <name type="ordered locus">BL02079</name>
</gene>
<organism>
    <name type="scientific">Bacillus licheniformis (strain ATCC 14580 / DSM 13 / JCM 2505 / CCUG 7422 / NBRC 12200 / NCIMB 9375 / NCTC 10341 / NRRL NRS-1264 / Gibson 46)</name>
    <dbReference type="NCBI Taxonomy" id="279010"/>
    <lineage>
        <taxon>Bacteria</taxon>
        <taxon>Bacillati</taxon>
        <taxon>Bacillota</taxon>
        <taxon>Bacilli</taxon>
        <taxon>Bacillales</taxon>
        <taxon>Bacillaceae</taxon>
        <taxon>Bacillus</taxon>
    </lineage>
</organism>
<accession>Q65H34</accession>
<accession>Q62SJ0</accession>
<comment type="function">
    <text evidence="1">Involved in the biosynthesis of the chorismate, which leads to the biosynthesis of aromatic amino acids. Catalyzes the reversible NADPH linked reduction of 3-dehydroshikimate (DHSA) to yield shikimate (SA).</text>
</comment>
<comment type="catalytic activity">
    <reaction evidence="1">
        <text>shikimate + NADP(+) = 3-dehydroshikimate + NADPH + H(+)</text>
        <dbReference type="Rhea" id="RHEA:17737"/>
        <dbReference type="ChEBI" id="CHEBI:15378"/>
        <dbReference type="ChEBI" id="CHEBI:16630"/>
        <dbReference type="ChEBI" id="CHEBI:36208"/>
        <dbReference type="ChEBI" id="CHEBI:57783"/>
        <dbReference type="ChEBI" id="CHEBI:58349"/>
        <dbReference type="EC" id="1.1.1.25"/>
    </reaction>
</comment>
<comment type="pathway">
    <text evidence="1">Metabolic intermediate biosynthesis; chorismate biosynthesis; chorismate from D-erythrose 4-phosphate and phosphoenolpyruvate: step 4/7.</text>
</comment>
<comment type="subunit">
    <text evidence="1">Homodimer.</text>
</comment>
<comment type="similarity">
    <text evidence="1">Belongs to the shikimate dehydrogenase family.</text>
</comment>
<feature type="chain" id="PRO_1000021263" description="Shikimate dehydrogenase (NADP(+))">
    <location>
        <begin position="1"/>
        <end position="278"/>
    </location>
</feature>
<feature type="active site" description="Proton acceptor" evidence="1">
    <location>
        <position position="66"/>
    </location>
</feature>
<feature type="binding site" evidence="1">
    <location>
        <begin position="15"/>
        <end position="17"/>
    </location>
    <ligand>
        <name>shikimate</name>
        <dbReference type="ChEBI" id="CHEBI:36208"/>
    </ligand>
</feature>
<feature type="binding site" evidence="1">
    <location>
        <position position="62"/>
    </location>
    <ligand>
        <name>shikimate</name>
        <dbReference type="ChEBI" id="CHEBI:36208"/>
    </ligand>
</feature>
<feature type="binding site" evidence="1">
    <location>
        <position position="78"/>
    </location>
    <ligand>
        <name>NADP(+)</name>
        <dbReference type="ChEBI" id="CHEBI:58349"/>
    </ligand>
</feature>
<feature type="binding site" evidence="1">
    <location>
        <position position="87"/>
    </location>
    <ligand>
        <name>shikimate</name>
        <dbReference type="ChEBI" id="CHEBI:36208"/>
    </ligand>
</feature>
<feature type="binding site" evidence="1">
    <location>
        <position position="102"/>
    </location>
    <ligand>
        <name>shikimate</name>
        <dbReference type="ChEBI" id="CHEBI:36208"/>
    </ligand>
</feature>
<feature type="binding site" evidence="1">
    <location>
        <begin position="127"/>
        <end position="131"/>
    </location>
    <ligand>
        <name>NADP(+)</name>
        <dbReference type="ChEBI" id="CHEBI:58349"/>
    </ligand>
</feature>
<feature type="binding site" evidence="1">
    <location>
        <begin position="151"/>
        <end position="156"/>
    </location>
    <ligand>
        <name>NADP(+)</name>
        <dbReference type="ChEBI" id="CHEBI:58349"/>
    </ligand>
</feature>
<feature type="binding site" evidence="1">
    <location>
        <position position="217"/>
    </location>
    <ligand>
        <name>NADP(+)</name>
        <dbReference type="ChEBI" id="CHEBI:58349"/>
    </ligand>
</feature>
<feature type="binding site" evidence="1">
    <location>
        <position position="219"/>
    </location>
    <ligand>
        <name>shikimate</name>
        <dbReference type="ChEBI" id="CHEBI:36208"/>
    </ligand>
</feature>
<feature type="binding site" evidence="1">
    <location>
        <position position="240"/>
    </location>
    <ligand>
        <name>NADP(+)</name>
        <dbReference type="ChEBI" id="CHEBI:58349"/>
    </ligand>
</feature>
<proteinExistence type="inferred from homology"/>
<protein>
    <recommendedName>
        <fullName evidence="1">Shikimate dehydrogenase (NADP(+))</fullName>
        <shortName evidence="1">SDH</shortName>
        <ecNumber evidence="1">1.1.1.25</ecNumber>
    </recommendedName>
</protein>
<name>AROE_BACLD</name>
<sequence>MKPIYGLIGNPVAHSMSPDIHNAALKDLSLEGHYHAFRVENEDLEDAVKGMRALGIQGFNVTVPHKVSIMKHLDRIDESAEALGAVNTVRREKEGLVGYNTDGAGFLKSLKPSLDRPLSELSILLIGAGGAARAIFTTLAAETPKRLDVANRTPEKALAFTQRFDGEARALSLQEAEADLSAYDIVIQTTSVGMHPNVEAAPLSLANAKETCLVCDIIYNPLKTALLHEAEAKGLKTLDGVGMFIGQAALAFELWTGHEPNMEKMKSIVLQQLGGKSC</sequence>